<evidence type="ECO:0000255" key="1">
    <source>
        <dbReference type="HAMAP-Rule" id="MF_00082"/>
    </source>
</evidence>
<feature type="chain" id="PRO_0000112605" description="Acetylglutamate kinase">
    <location>
        <begin position="1"/>
        <end position="285"/>
    </location>
</feature>
<feature type="binding site" evidence="1">
    <location>
        <begin position="55"/>
        <end position="56"/>
    </location>
    <ligand>
        <name>substrate</name>
    </ligand>
</feature>
<feature type="binding site" evidence="1">
    <location>
        <position position="77"/>
    </location>
    <ligand>
        <name>substrate</name>
    </ligand>
</feature>
<feature type="binding site" evidence="1">
    <location>
        <position position="171"/>
    </location>
    <ligand>
        <name>substrate</name>
    </ligand>
</feature>
<feature type="site" description="Transition state stabilizer" evidence="1">
    <location>
        <position position="20"/>
    </location>
</feature>
<feature type="site" description="Transition state stabilizer" evidence="1">
    <location>
        <position position="230"/>
    </location>
</feature>
<protein>
    <recommendedName>
        <fullName evidence="1">Acetylglutamate kinase</fullName>
        <ecNumber evidence="1">2.7.2.8</ecNumber>
    </recommendedName>
    <alternativeName>
        <fullName evidence="1">N-acetyl-L-glutamate 5-phosphotransferase</fullName>
    </alternativeName>
    <alternativeName>
        <fullName evidence="1">NAG kinase</fullName>
        <shortName evidence="1">NAGK</shortName>
    </alternativeName>
</protein>
<organism>
    <name type="scientific">Chlorobaculum tepidum (strain ATCC 49652 / DSM 12025 / NBRC 103806 / TLS)</name>
    <name type="common">Chlorobium tepidum</name>
    <dbReference type="NCBI Taxonomy" id="194439"/>
    <lineage>
        <taxon>Bacteria</taxon>
        <taxon>Pseudomonadati</taxon>
        <taxon>Chlorobiota</taxon>
        <taxon>Chlorobiia</taxon>
        <taxon>Chlorobiales</taxon>
        <taxon>Chlorobiaceae</taxon>
        <taxon>Chlorobaculum</taxon>
    </lineage>
</organism>
<dbReference type="EC" id="2.7.2.8" evidence="1"/>
<dbReference type="EMBL" id="AE006470">
    <property type="protein sequence ID" value="AAM72344.1"/>
    <property type="molecule type" value="Genomic_DNA"/>
</dbReference>
<dbReference type="RefSeq" id="NP_662002.1">
    <property type="nucleotide sequence ID" value="NC_002932.3"/>
</dbReference>
<dbReference type="SMR" id="P59297"/>
<dbReference type="STRING" id="194439.CT1111"/>
<dbReference type="EnsemblBacteria" id="AAM72344">
    <property type="protein sequence ID" value="AAM72344"/>
    <property type="gene ID" value="CT1111"/>
</dbReference>
<dbReference type="KEGG" id="cte:CT1111"/>
<dbReference type="PATRIC" id="fig|194439.7.peg.1009"/>
<dbReference type="eggNOG" id="COG0548">
    <property type="taxonomic scope" value="Bacteria"/>
</dbReference>
<dbReference type="HOGENOM" id="CLU_053680_0_0_10"/>
<dbReference type="OrthoDB" id="9803155at2"/>
<dbReference type="UniPathway" id="UPA00068">
    <property type="reaction ID" value="UER00107"/>
</dbReference>
<dbReference type="Proteomes" id="UP000001007">
    <property type="component" value="Chromosome"/>
</dbReference>
<dbReference type="GO" id="GO:0005737">
    <property type="term" value="C:cytoplasm"/>
    <property type="evidence" value="ECO:0007669"/>
    <property type="project" value="UniProtKB-SubCell"/>
</dbReference>
<dbReference type="GO" id="GO:0003991">
    <property type="term" value="F:acetylglutamate kinase activity"/>
    <property type="evidence" value="ECO:0007669"/>
    <property type="project" value="UniProtKB-UniRule"/>
</dbReference>
<dbReference type="GO" id="GO:0005524">
    <property type="term" value="F:ATP binding"/>
    <property type="evidence" value="ECO:0007669"/>
    <property type="project" value="UniProtKB-UniRule"/>
</dbReference>
<dbReference type="GO" id="GO:0042450">
    <property type="term" value="P:arginine biosynthetic process via ornithine"/>
    <property type="evidence" value="ECO:0007669"/>
    <property type="project" value="UniProtKB-UniRule"/>
</dbReference>
<dbReference type="GO" id="GO:0006526">
    <property type="term" value="P:L-arginine biosynthetic process"/>
    <property type="evidence" value="ECO:0007669"/>
    <property type="project" value="UniProtKB-UniPathway"/>
</dbReference>
<dbReference type="CDD" id="cd04250">
    <property type="entry name" value="AAK_NAGK-C"/>
    <property type="match status" value="1"/>
</dbReference>
<dbReference type="FunFam" id="3.40.1160.10:FF:000004">
    <property type="entry name" value="Acetylglutamate kinase"/>
    <property type="match status" value="1"/>
</dbReference>
<dbReference type="Gene3D" id="3.40.1160.10">
    <property type="entry name" value="Acetylglutamate kinase-like"/>
    <property type="match status" value="1"/>
</dbReference>
<dbReference type="HAMAP" id="MF_00082">
    <property type="entry name" value="ArgB"/>
    <property type="match status" value="1"/>
</dbReference>
<dbReference type="InterPro" id="IPR036393">
    <property type="entry name" value="AceGlu_kinase-like_sf"/>
</dbReference>
<dbReference type="InterPro" id="IPR004662">
    <property type="entry name" value="AcgluKinase_fam"/>
</dbReference>
<dbReference type="InterPro" id="IPR037528">
    <property type="entry name" value="ArgB"/>
</dbReference>
<dbReference type="InterPro" id="IPR001048">
    <property type="entry name" value="Asp/Glu/Uridylate_kinase"/>
</dbReference>
<dbReference type="InterPro" id="IPR001057">
    <property type="entry name" value="Glu/AcGlu_kinase"/>
</dbReference>
<dbReference type="InterPro" id="IPR041727">
    <property type="entry name" value="NAGK-C"/>
</dbReference>
<dbReference type="NCBIfam" id="TIGR00761">
    <property type="entry name" value="argB"/>
    <property type="match status" value="1"/>
</dbReference>
<dbReference type="PANTHER" id="PTHR23342">
    <property type="entry name" value="N-ACETYLGLUTAMATE SYNTHASE"/>
    <property type="match status" value="1"/>
</dbReference>
<dbReference type="PANTHER" id="PTHR23342:SF0">
    <property type="entry name" value="N-ACETYLGLUTAMATE SYNTHASE, MITOCHONDRIAL"/>
    <property type="match status" value="1"/>
</dbReference>
<dbReference type="Pfam" id="PF00696">
    <property type="entry name" value="AA_kinase"/>
    <property type="match status" value="1"/>
</dbReference>
<dbReference type="PIRSF" id="PIRSF000728">
    <property type="entry name" value="NAGK"/>
    <property type="match status" value="1"/>
</dbReference>
<dbReference type="PRINTS" id="PR00474">
    <property type="entry name" value="GLU5KINASE"/>
</dbReference>
<dbReference type="SUPFAM" id="SSF53633">
    <property type="entry name" value="Carbamate kinase-like"/>
    <property type="match status" value="1"/>
</dbReference>
<name>ARGB_CHLTE</name>
<keyword id="KW-0028">Amino-acid biosynthesis</keyword>
<keyword id="KW-0055">Arginine biosynthesis</keyword>
<keyword id="KW-0067">ATP-binding</keyword>
<keyword id="KW-0963">Cytoplasm</keyword>
<keyword id="KW-0418">Kinase</keyword>
<keyword id="KW-0547">Nucleotide-binding</keyword>
<keyword id="KW-1185">Reference proteome</keyword>
<keyword id="KW-0808">Transferase</keyword>
<reference key="1">
    <citation type="journal article" date="2002" name="Proc. Natl. Acad. Sci. U.S.A.">
        <title>The complete genome sequence of Chlorobium tepidum TLS, a photosynthetic, anaerobic, green-sulfur bacterium.</title>
        <authorList>
            <person name="Eisen J.A."/>
            <person name="Nelson K.E."/>
            <person name="Paulsen I.T."/>
            <person name="Heidelberg J.F."/>
            <person name="Wu M."/>
            <person name="Dodson R.J."/>
            <person name="DeBoy R.T."/>
            <person name="Gwinn M.L."/>
            <person name="Nelson W.C."/>
            <person name="Haft D.H."/>
            <person name="Hickey E.K."/>
            <person name="Peterson J.D."/>
            <person name="Durkin A.S."/>
            <person name="Kolonay J.F."/>
            <person name="Yang F."/>
            <person name="Holt I.E."/>
            <person name="Umayam L.A."/>
            <person name="Mason T.M."/>
            <person name="Brenner M."/>
            <person name="Shea T.P."/>
            <person name="Parksey D.S."/>
            <person name="Nierman W.C."/>
            <person name="Feldblyum T.V."/>
            <person name="Hansen C.L."/>
            <person name="Craven M.B."/>
            <person name="Radune D."/>
            <person name="Vamathevan J.J."/>
            <person name="Khouri H.M."/>
            <person name="White O."/>
            <person name="Gruber T.M."/>
            <person name="Ketchum K.A."/>
            <person name="Venter J.C."/>
            <person name="Tettelin H."/>
            <person name="Bryant D.A."/>
            <person name="Fraser C.M."/>
        </authorList>
    </citation>
    <scope>NUCLEOTIDE SEQUENCE [LARGE SCALE GENOMIC DNA]</scope>
    <source>
        <strain>ATCC 49652 / DSM 12025 / NBRC 103806 / TLS</strain>
    </source>
</reference>
<proteinExistence type="inferred from homology"/>
<accession>P59297</accession>
<gene>
    <name evidence="1" type="primary">argB</name>
    <name type="ordered locus">CT1111</name>
</gene>
<sequence>MLVEALPYIRKFEGKTFVIKYGGAAMKDEVLKNIFAENVTLLRKVGIKVVIVHGGGDAITKTSAKLGLETTFVHGKRVTDRQTVDVIQMTLAGKVNQDIVQLINKDGGNAVGVSGLDADTILAKPSPNASTLGLVGEVAEINTRYIDLLCDAGLIPVIAPIGYDMEGNIYNINADDAAAAIAVALKAEKLIYVSDVEGVRVGNRILKTICKADAAELIEKGIITGGMIPKVVSAYQTLDGGVGKVHLIDGQITHSLLLEVFTNEGVGTQFVNELEQEPTAEEGAS</sequence>
<comment type="function">
    <text evidence="1">Catalyzes the ATP-dependent phosphorylation of N-acetyl-L-glutamate.</text>
</comment>
<comment type="catalytic activity">
    <reaction evidence="1">
        <text>N-acetyl-L-glutamate + ATP = N-acetyl-L-glutamyl 5-phosphate + ADP</text>
        <dbReference type="Rhea" id="RHEA:14629"/>
        <dbReference type="ChEBI" id="CHEBI:30616"/>
        <dbReference type="ChEBI" id="CHEBI:44337"/>
        <dbReference type="ChEBI" id="CHEBI:57936"/>
        <dbReference type="ChEBI" id="CHEBI:456216"/>
        <dbReference type="EC" id="2.7.2.8"/>
    </reaction>
</comment>
<comment type="pathway">
    <text evidence="1">Amino-acid biosynthesis; L-arginine biosynthesis; N(2)-acetyl-L-ornithine from L-glutamate: step 2/4.</text>
</comment>
<comment type="subcellular location">
    <subcellularLocation>
        <location evidence="1">Cytoplasm</location>
    </subcellularLocation>
</comment>
<comment type="similarity">
    <text evidence="1">Belongs to the acetylglutamate kinase family. ArgB subfamily.</text>
</comment>